<comment type="function">
    <text evidence="1">Bidirectionally degrades single-stranded DNA into large acid-insoluble oligonucleotides, which are then degraded further into small acid-soluble oligonucleotides.</text>
</comment>
<comment type="catalytic activity">
    <reaction evidence="1">
        <text>Exonucleolytic cleavage in either 5'- to 3'- or 3'- to 5'-direction to yield nucleoside 5'-phosphates.</text>
        <dbReference type="EC" id="3.1.11.6"/>
    </reaction>
</comment>
<comment type="subunit">
    <text evidence="1">Heterooligomer composed of large and small subunits.</text>
</comment>
<comment type="subcellular location">
    <subcellularLocation>
        <location evidence="1">Cytoplasm</location>
    </subcellularLocation>
</comment>
<comment type="similarity">
    <text evidence="1">Belongs to the XseB family.</text>
</comment>
<evidence type="ECO:0000255" key="1">
    <source>
        <dbReference type="HAMAP-Rule" id="MF_00337"/>
    </source>
</evidence>
<name>EX7S_CARHZ</name>
<feature type="chain" id="PRO_1000059715" description="Exodeoxyribonuclease 7 small subunit">
    <location>
        <begin position="1"/>
        <end position="77"/>
    </location>
</feature>
<proteinExistence type="inferred from homology"/>
<reference key="1">
    <citation type="journal article" date="2005" name="PLoS Genet.">
        <title>Life in hot carbon monoxide: the complete genome sequence of Carboxydothermus hydrogenoformans Z-2901.</title>
        <authorList>
            <person name="Wu M."/>
            <person name="Ren Q."/>
            <person name="Durkin A.S."/>
            <person name="Daugherty S.C."/>
            <person name="Brinkac L.M."/>
            <person name="Dodson R.J."/>
            <person name="Madupu R."/>
            <person name="Sullivan S.A."/>
            <person name="Kolonay J.F."/>
            <person name="Nelson W.C."/>
            <person name="Tallon L.J."/>
            <person name="Jones K.M."/>
            <person name="Ulrich L.E."/>
            <person name="Gonzalez J.M."/>
            <person name="Zhulin I.B."/>
            <person name="Robb F.T."/>
            <person name="Eisen J.A."/>
        </authorList>
    </citation>
    <scope>NUCLEOTIDE SEQUENCE [LARGE SCALE GENOMIC DNA]</scope>
    <source>
        <strain>ATCC BAA-161 / DSM 6008 / Z-2901</strain>
    </source>
</reference>
<gene>
    <name evidence="1" type="primary">xseB</name>
    <name type="ordered locus">CHY_1989</name>
</gene>
<accession>Q3AAM6</accession>
<sequence>MTFEEAMNRLNEIVERLERGNVGLEESLALFEEGLKLHRFCSEKLKELELKLVEVQEDEAGEVTFEEIVEMEDDLPF</sequence>
<organism>
    <name type="scientific">Carboxydothermus hydrogenoformans (strain ATCC BAA-161 / DSM 6008 / Z-2901)</name>
    <dbReference type="NCBI Taxonomy" id="246194"/>
    <lineage>
        <taxon>Bacteria</taxon>
        <taxon>Bacillati</taxon>
        <taxon>Bacillota</taxon>
        <taxon>Clostridia</taxon>
        <taxon>Thermoanaerobacterales</taxon>
        <taxon>Thermoanaerobacteraceae</taxon>
        <taxon>Carboxydothermus</taxon>
    </lineage>
</organism>
<protein>
    <recommendedName>
        <fullName evidence="1">Exodeoxyribonuclease 7 small subunit</fullName>
        <ecNumber evidence="1">3.1.11.6</ecNumber>
    </recommendedName>
    <alternativeName>
        <fullName evidence="1">Exodeoxyribonuclease VII small subunit</fullName>
        <shortName evidence="1">Exonuclease VII small subunit</shortName>
    </alternativeName>
</protein>
<keyword id="KW-0963">Cytoplasm</keyword>
<keyword id="KW-0269">Exonuclease</keyword>
<keyword id="KW-0378">Hydrolase</keyword>
<keyword id="KW-0540">Nuclease</keyword>
<keyword id="KW-1185">Reference proteome</keyword>
<dbReference type="EC" id="3.1.11.6" evidence="1"/>
<dbReference type="EMBL" id="CP000141">
    <property type="protein sequence ID" value="ABB15883.1"/>
    <property type="molecule type" value="Genomic_DNA"/>
</dbReference>
<dbReference type="SMR" id="Q3AAM6"/>
<dbReference type="FunCoup" id="Q3AAM6">
    <property type="interactions" value="229"/>
</dbReference>
<dbReference type="STRING" id="246194.CHY_1989"/>
<dbReference type="KEGG" id="chy:CHY_1989"/>
<dbReference type="eggNOG" id="COG1722">
    <property type="taxonomic scope" value="Bacteria"/>
</dbReference>
<dbReference type="HOGENOM" id="CLU_145918_3_4_9"/>
<dbReference type="InParanoid" id="Q3AAM6"/>
<dbReference type="OrthoDB" id="1771251at2"/>
<dbReference type="Proteomes" id="UP000002706">
    <property type="component" value="Chromosome"/>
</dbReference>
<dbReference type="GO" id="GO:0005829">
    <property type="term" value="C:cytosol"/>
    <property type="evidence" value="ECO:0007669"/>
    <property type="project" value="TreeGrafter"/>
</dbReference>
<dbReference type="GO" id="GO:0009318">
    <property type="term" value="C:exodeoxyribonuclease VII complex"/>
    <property type="evidence" value="ECO:0007669"/>
    <property type="project" value="InterPro"/>
</dbReference>
<dbReference type="GO" id="GO:0008855">
    <property type="term" value="F:exodeoxyribonuclease VII activity"/>
    <property type="evidence" value="ECO:0007669"/>
    <property type="project" value="UniProtKB-UniRule"/>
</dbReference>
<dbReference type="GO" id="GO:0006308">
    <property type="term" value="P:DNA catabolic process"/>
    <property type="evidence" value="ECO:0007669"/>
    <property type="project" value="UniProtKB-UniRule"/>
</dbReference>
<dbReference type="Gene3D" id="1.10.287.1040">
    <property type="entry name" value="Exonuclease VII, small subunit"/>
    <property type="match status" value="1"/>
</dbReference>
<dbReference type="HAMAP" id="MF_00337">
    <property type="entry name" value="Exonuc_7_S"/>
    <property type="match status" value="1"/>
</dbReference>
<dbReference type="InterPro" id="IPR003761">
    <property type="entry name" value="Exonuc_VII_S"/>
</dbReference>
<dbReference type="InterPro" id="IPR037004">
    <property type="entry name" value="Exonuc_VII_ssu_sf"/>
</dbReference>
<dbReference type="NCBIfam" id="TIGR01280">
    <property type="entry name" value="xseB"/>
    <property type="match status" value="1"/>
</dbReference>
<dbReference type="PANTHER" id="PTHR34137">
    <property type="entry name" value="EXODEOXYRIBONUCLEASE 7 SMALL SUBUNIT"/>
    <property type="match status" value="1"/>
</dbReference>
<dbReference type="PANTHER" id="PTHR34137:SF1">
    <property type="entry name" value="EXODEOXYRIBONUCLEASE 7 SMALL SUBUNIT"/>
    <property type="match status" value="1"/>
</dbReference>
<dbReference type="Pfam" id="PF02609">
    <property type="entry name" value="Exonuc_VII_S"/>
    <property type="match status" value="1"/>
</dbReference>
<dbReference type="PIRSF" id="PIRSF006488">
    <property type="entry name" value="Exonuc_VII_S"/>
    <property type="match status" value="1"/>
</dbReference>
<dbReference type="SUPFAM" id="SSF116842">
    <property type="entry name" value="XseB-like"/>
    <property type="match status" value="1"/>
</dbReference>